<accession>Q8K9M6</accession>
<feature type="chain" id="PRO_0000093128" description="Zinc import ATP-binding protein ZnuC">
    <location>
        <begin position="1"/>
        <end position="238"/>
    </location>
</feature>
<feature type="domain" description="ABC transporter" evidence="1">
    <location>
        <begin position="5"/>
        <end position="220"/>
    </location>
</feature>
<feature type="binding site" evidence="1">
    <location>
        <begin position="37"/>
        <end position="44"/>
    </location>
    <ligand>
        <name>ATP</name>
        <dbReference type="ChEBI" id="CHEBI:30616"/>
    </ligand>
</feature>
<dbReference type="EC" id="7.2.2.20" evidence="1"/>
<dbReference type="EMBL" id="AE013218">
    <property type="protein sequence ID" value="AAM67862.1"/>
    <property type="molecule type" value="Genomic_DNA"/>
</dbReference>
<dbReference type="RefSeq" id="WP_011053829.1">
    <property type="nucleotide sequence ID" value="NC_004061.1"/>
</dbReference>
<dbReference type="SMR" id="Q8K9M6"/>
<dbReference type="STRING" id="198804.BUsg_308"/>
<dbReference type="GeneID" id="93003777"/>
<dbReference type="KEGG" id="bas:BUsg_308"/>
<dbReference type="eggNOG" id="COG1121">
    <property type="taxonomic scope" value="Bacteria"/>
</dbReference>
<dbReference type="HOGENOM" id="CLU_000604_1_11_6"/>
<dbReference type="Proteomes" id="UP000000416">
    <property type="component" value="Chromosome"/>
</dbReference>
<dbReference type="GO" id="GO:0005886">
    <property type="term" value="C:plasma membrane"/>
    <property type="evidence" value="ECO:0007669"/>
    <property type="project" value="UniProtKB-SubCell"/>
</dbReference>
<dbReference type="GO" id="GO:0015633">
    <property type="term" value="F:ABC-type zinc transporter activity"/>
    <property type="evidence" value="ECO:0007669"/>
    <property type="project" value="UniProtKB-EC"/>
</dbReference>
<dbReference type="GO" id="GO:0005524">
    <property type="term" value="F:ATP binding"/>
    <property type="evidence" value="ECO:0007669"/>
    <property type="project" value="UniProtKB-KW"/>
</dbReference>
<dbReference type="GO" id="GO:0016887">
    <property type="term" value="F:ATP hydrolysis activity"/>
    <property type="evidence" value="ECO:0007669"/>
    <property type="project" value="InterPro"/>
</dbReference>
<dbReference type="GO" id="GO:0010043">
    <property type="term" value="P:response to zinc ion"/>
    <property type="evidence" value="ECO:0007669"/>
    <property type="project" value="TreeGrafter"/>
</dbReference>
<dbReference type="FunFam" id="3.40.50.300:FF:000392">
    <property type="entry name" value="Zinc import ATP-binding protein ZnuC"/>
    <property type="match status" value="1"/>
</dbReference>
<dbReference type="Gene3D" id="3.40.50.300">
    <property type="entry name" value="P-loop containing nucleotide triphosphate hydrolases"/>
    <property type="match status" value="1"/>
</dbReference>
<dbReference type="InterPro" id="IPR003593">
    <property type="entry name" value="AAA+_ATPase"/>
</dbReference>
<dbReference type="InterPro" id="IPR003439">
    <property type="entry name" value="ABC_transporter-like_ATP-bd"/>
</dbReference>
<dbReference type="InterPro" id="IPR017871">
    <property type="entry name" value="ABC_transporter-like_CS"/>
</dbReference>
<dbReference type="InterPro" id="IPR050153">
    <property type="entry name" value="Metal_Ion_Import_ABC"/>
</dbReference>
<dbReference type="InterPro" id="IPR027417">
    <property type="entry name" value="P-loop_NTPase"/>
</dbReference>
<dbReference type="NCBIfam" id="NF007090">
    <property type="entry name" value="PRK09544.1"/>
    <property type="match status" value="1"/>
</dbReference>
<dbReference type="PANTHER" id="PTHR42734">
    <property type="entry name" value="METAL TRANSPORT SYSTEM ATP-BINDING PROTEIN TM_0124-RELATED"/>
    <property type="match status" value="1"/>
</dbReference>
<dbReference type="PANTHER" id="PTHR42734:SF9">
    <property type="entry name" value="ZINC IMPORT ATP-BINDING PROTEIN ZNUC"/>
    <property type="match status" value="1"/>
</dbReference>
<dbReference type="Pfam" id="PF00005">
    <property type="entry name" value="ABC_tran"/>
    <property type="match status" value="1"/>
</dbReference>
<dbReference type="SMART" id="SM00382">
    <property type="entry name" value="AAA"/>
    <property type="match status" value="1"/>
</dbReference>
<dbReference type="SUPFAM" id="SSF52540">
    <property type="entry name" value="P-loop containing nucleoside triphosphate hydrolases"/>
    <property type="match status" value="1"/>
</dbReference>
<dbReference type="PROSITE" id="PS00211">
    <property type="entry name" value="ABC_TRANSPORTER_1"/>
    <property type="match status" value="1"/>
</dbReference>
<dbReference type="PROSITE" id="PS50893">
    <property type="entry name" value="ABC_TRANSPORTER_2"/>
    <property type="match status" value="1"/>
</dbReference>
<dbReference type="PROSITE" id="PS51298">
    <property type="entry name" value="ZNUC"/>
    <property type="match status" value="1"/>
</dbReference>
<keyword id="KW-0067">ATP-binding</keyword>
<keyword id="KW-0997">Cell inner membrane</keyword>
<keyword id="KW-1003">Cell membrane</keyword>
<keyword id="KW-0406">Ion transport</keyword>
<keyword id="KW-0472">Membrane</keyword>
<keyword id="KW-0547">Nucleotide-binding</keyword>
<keyword id="KW-1278">Translocase</keyword>
<keyword id="KW-0813">Transport</keyword>
<keyword id="KW-0862">Zinc</keyword>
<keyword id="KW-0864">Zinc transport</keyword>
<gene>
    <name evidence="1" type="primary">znuC</name>
    <name type="ordered locus">BUsg_308</name>
</gene>
<sequence length="238" mass="26998">MLELITLKNIHVSFSGRSILSNISFSLLSNRIITLIGPNGAGKSTLIRVILGLIQPNLGNIIRSPKISVGYVPQKLYFNNLLPITVEKFMKLSKRKKNINILKILKRVKAQSLQYSRLQNLSGGEMQRILLARALLNNPNLLVLDEPTQGVDVMGQLDLYELINQIRSEMQCSILIVSHDLNFVMAKTNYVICLNKHICCSGTPQTVFKNLEFISIFGLKHIRELAIYQHNHDHVHQY</sequence>
<protein>
    <recommendedName>
        <fullName evidence="1">Zinc import ATP-binding protein ZnuC</fullName>
        <ecNumber evidence="1">7.2.2.20</ecNumber>
    </recommendedName>
</protein>
<reference key="1">
    <citation type="journal article" date="2002" name="Science">
        <title>50 million years of genomic stasis in endosymbiotic bacteria.</title>
        <authorList>
            <person name="Tamas I."/>
            <person name="Klasson L."/>
            <person name="Canbaeck B."/>
            <person name="Naeslund A.K."/>
            <person name="Eriksson A.-S."/>
            <person name="Wernegreen J.J."/>
            <person name="Sandstroem J.P."/>
            <person name="Moran N.A."/>
            <person name="Andersson S.G.E."/>
        </authorList>
    </citation>
    <scope>NUCLEOTIDE SEQUENCE [LARGE SCALE GENOMIC DNA]</scope>
    <source>
        <strain>Sg</strain>
    </source>
</reference>
<comment type="function">
    <text evidence="1">Part of the ABC transporter complex ZnuABC involved in zinc import. Responsible for energy coupling to the transport system.</text>
</comment>
<comment type="catalytic activity">
    <reaction evidence="1">
        <text>Zn(2+)(out) + ATP(in) + H2O(in) = Zn(2+)(in) + ADP(in) + phosphate(in) + H(+)(in)</text>
        <dbReference type="Rhea" id="RHEA:29795"/>
        <dbReference type="ChEBI" id="CHEBI:15377"/>
        <dbReference type="ChEBI" id="CHEBI:15378"/>
        <dbReference type="ChEBI" id="CHEBI:29105"/>
        <dbReference type="ChEBI" id="CHEBI:30616"/>
        <dbReference type="ChEBI" id="CHEBI:43474"/>
        <dbReference type="ChEBI" id="CHEBI:456216"/>
        <dbReference type="EC" id="7.2.2.20"/>
    </reaction>
</comment>
<comment type="subunit">
    <text evidence="1">The complex is composed of two ATP-binding proteins (ZnuC), two transmembrane proteins (ZnuB) and a solute-binding protein (ZnuA).</text>
</comment>
<comment type="subcellular location">
    <subcellularLocation>
        <location evidence="1">Cell inner membrane</location>
        <topology evidence="1">Peripheral membrane protein</topology>
    </subcellularLocation>
</comment>
<comment type="similarity">
    <text evidence="1">Belongs to the ABC transporter superfamily. Zinc importer (TC 3.A.1.15.5) family.</text>
</comment>
<name>ZNUC_BUCAP</name>
<proteinExistence type="inferred from homology"/>
<organism>
    <name type="scientific">Buchnera aphidicola subsp. Schizaphis graminum (strain Sg)</name>
    <dbReference type="NCBI Taxonomy" id="198804"/>
    <lineage>
        <taxon>Bacteria</taxon>
        <taxon>Pseudomonadati</taxon>
        <taxon>Pseudomonadota</taxon>
        <taxon>Gammaproteobacteria</taxon>
        <taxon>Enterobacterales</taxon>
        <taxon>Erwiniaceae</taxon>
        <taxon>Buchnera</taxon>
    </lineage>
</organism>
<evidence type="ECO:0000255" key="1">
    <source>
        <dbReference type="HAMAP-Rule" id="MF_01725"/>
    </source>
</evidence>